<name>CHSA_IPOTF</name>
<gene>
    <name type="primary">CHSA</name>
</gene>
<keyword id="KW-0012">Acyltransferase</keyword>
<keyword id="KW-0284">Flavonoid biosynthesis</keyword>
<keyword id="KW-0808">Transferase</keyword>
<accession>P48401</accession>
<reference key="1">
    <citation type="journal article" date="1995" name="Proc. Natl. Acad. Sci. U.S.A.">
        <title>Evolution of the chalcone synthase gene family in the genus Ipomoea.</title>
        <authorList>
            <person name="Durbin M.L."/>
            <person name="Learn G.H."/>
            <person name="Huttley G.A."/>
            <person name="Clegg M.T."/>
        </authorList>
    </citation>
    <scope>NUCLEOTIDE SEQUENCE [GENOMIC DNA]</scope>
</reference>
<feature type="chain" id="PRO_0000215997" description="Chalcone synthase A">
    <location>
        <begin position="1"/>
        <end position="362" status="greater than"/>
    </location>
</feature>
<feature type="active site" evidence="1">
    <location>
        <position position="168"/>
    </location>
</feature>
<feature type="non-terminal residue">
    <location>
        <position position="362"/>
    </location>
</feature>
<evidence type="ECO:0000255" key="1">
    <source>
        <dbReference type="PROSITE-ProRule" id="PRU10023"/>
    </source>
</evidence>
<evidence type="ECO:0000305" key="2"/>
<dbReference type="EC" id="2.3.1.74"/>
<dbReference type="EMBL" id="U15950">
    <property type="protein sequence ID" value="AAC49032.1"/>
    <property type="molecule type" value="Genomic_DNA"/>
</dbReference>
<dbReference type="SMR" id="P48401"/>
<dbReference type="UniPathway" id="UPA00154"/>
<dbReference type="GO" id="GO:0016210">
    <property type="term" value="F:naringenin-chalcone synthase activity"/>
    <property type="evidence" value="ECO:0007669"/>
    <property type="project" value="UniProtKB-EC"/>
</dbReference>
<dbReference type="GO" id="GO:0009813">
    <property type="term" value="P:flavonoid biosynthetic process"/>
    <property type="evidence" value="ECO:0007669"/>
    <property type="project" value="UniProtKB-UniPathway"/>
</dbReference>
<dbReference type="GO" id="GO:0030639">
    <property type="term" value="P:polyketide biosynthetic process"/>
    <property type="evidence" value="ECO:0007669"/>
    <property type="project" value="TreeGrafter"/>
</dbReference>
<dbReference type="CDD" id="cd00831">
    <property type="entry name" value="CHS_like"/>
    <property type="match status" value="1"/>
</dbReference>
<dbReference type="FunFam" id="3.40.47.10:FF:000014">
    <property type="entry name" value="Chalcone synthase 1"/>
    <property type="match status" value="1"/>
</dbReference>
<dbReference type="FunFam" id="3.40.47.10:FF:000025">
    <property type="entry name" value="Chalcone synthase 2"/>
    <property type="match status" value="1"/>
</dbReference>
<dbReference type="Gene3D" id="3.40.47.10">
    <property type="match status" value="2"/>
</dbReference>
<dbReference type="InterPro" id="IPR012328">
    <property type="entry name" value="Chalcone/stilbene_synt_C"/>
</dbReference>
<dbReference type="InterPro" id="IPR001099">
    <property type="entry name" value="Chalcone/stilbene_synt_N"/>
</dbReference>
<dbReference type="InterPro" id="IPR018088">
    <property type="entry name" value="Chalcone/stilbene_synthase_AS"/>
</dbReference>
<dbReference type="InterPro" id="IPR011141">
    <property type="entry name" value="Polyketide_synthase_type-III"/>
</dbReference>
<dbReference type="InterPro" id="IPR016039">
    <property type="entry name" value="Thiolase-like"/>
</dbReference>
<dbReference type="PANTHER" id="PTHR11877:SF104">
    <property type="entry name" value="CHALCONE SYNTHASE"/>
    <property type="match status" value="1"/>
</dbReference>
<dbReference type="PANTHER" id="PTHR11877">
    <property type="entry name" value="HYDROXYMETHYLGLUTARYL-COA SYNTHASE"/>
    <property type="match status" value="1"/>
</dbReference>
<dbReference type="Pfam" id="PF02797">
    <property type="entry name" value="Chal_sti_synt_C"/>
    <property type="match status" value="1"/>
</dbReference>
<dbReference type="Pfam" id="PF00195">
    <property type="entry name" value="Chal_sti_synt_N"/>
    <property type="match status" value="1"/>
</dbReference>
<dbReference type="PIRSF" id="PIRSF000451">
    <property type="entry name" value="PKS_III"/>
    <property type="match status" value="1"/>
</dbReference>
<dbReference type="SUPFAM" id="SSF53901">
    <property type="entry name" value="Thiolase-like"/>
    <property type="match status" value="2"/>
</dbReference>
<dbReference type="PROSITE" id="PS00441">
    <property type="entry name" value="CHALCONE_SYNTH"/>
    <property type="match status" value="1"/>
</dbReference>
<organism>
    <name type="scientific">Ipomoea trifida</name>
    <name type="common">Morning glory</name>
    <dbReference type="NCBI Taxonomy" id="35884"/>
    <lineage>
        <taxon>Eukaryota</taxon>
        <taxon>Viridiplantae</taxon>
        <taxon>Streptophyta</taxon>
        <taxon>Embryophyta</taxon>
        <taxon>Tracheophyta</taxon>
        <taxon>Spermatophyta</taxon>
        <taxon>Magnoliopsida</taxon>
        <taxon>eudicotyledons</taxon>
        <taxon>Gunneridae</taxon>
        <taxon>Pentapetalae</taxon>
        <taxon>asterids</taxon>
        <taxon>lamiids</taxon>
        <taxon>Solanales</taxon>
        <taxon>Convolvulaceae</taxon>
        <taxon>Ipomoeeae</taxon>
        <taxon>Ipomoea</taxon>
    </lineage>
</organism>
<protein>
    <recommendedName>
        <fullName>Chalcone synthase A</fullName>
        <ecNumber>2.3.1.74</ecNumber>
    </recommendedName>
    <alternativeName>
        <fullName>Naringenin-chalcone synthase A</fullName>
        <shortName>CHS-A</shortName>
    </alternativeName>
</protein>
<sequence>MSPTATVQLTDDTAKRFEGHAKLLAIGTATPTNWVDQATYPDFYFRITNSEHLLEHKEKFRRICNKSKIRKRHLVLTKELLKKNPNLCTYNDASLNTRQDILVSEVPKLGKEAAMKAIKEWGRPISEITHLVFCTTSGVDMPGADFQLTKLLGLNSSVKRLMMYQQGCNAGAAMLRLVKDLAENNKGARVLVVCSEITINIFRGPSLEQDDNLLAQCLFGDGSAAMIVGKDPRPGLETPLFELVSSAQTIVPNTDSHLKLHLREMGLTFHCSRAVPSVLAENVEDCLVKAFEPYGISDWNSIFWVFHPGGNAIVDRVEERLGLGPERLRASRDVLSEYGNLTSACVLFILDEMRKKSKKDEQ</sequence>
<comment type="function">
    <text>The primary product of this enzyme is 4,2',4',6'-tetrahydroxychalcone (also termed naringenin-chalcone or chalcone) which can under specific conditions spontaneously isomerize into naringenin.</text>
</comment>
<comment type="catalytic activity">
    <reaction evidence="1">
        <text>(E)-4-coumaroyl-CoA + 3 malonyl-CoA + 3 H(+) = 2',4,4',6'-tetrahydroxychalcone + 3 CO2 + 4 CoA</text>
        <dbReference type="Rhea" id="RHEA:11128"/>
        <dbReference type="ChEBI" id="CHEBI:15378"/>
        <dbReference type="ChEBI" id="CHEBI:15413"/>
        <dbReference type="ChEBI" id="CHEBI:16526"/>
        <dbReference type="ChEBI" id="CHEBI:57287"/>
        <dbReference type="ChEBI" id="CHEBI:57384"/>
        <dbReference type="ChEBI" id="CHEBI:85008"/>
        <dbReference type="EC" id="2.3.1.74"/>
    </reaction>
</comment>
<comment type="pathway">
    <text>Secondary metabolite biosynthesis; flavonoid biosynthesis.</text>
</comment>
<comment type="similarity">
    <text evidence="2">Belongs to the thiolase-like superfamily. Chalcone/stilbene synthases family.</text>
</comment>
<proteinExistence type="inferred from homology"/>